<reference key="1">
    <citation type="journal article" date="2004" name="Science">
        <title>The Ashbya gossypii genome as a tool for mapping the ancient Saccharomyces cerevisiae genome.</title>
        <authorList>
            <person name="Dietrich F.S."/>
            <person name="Voegeli S."/>
            <person name="Brachat S."/>
            <person name="Lerch A."/>
            <person name="Gates K."/>
            <person name="Steiner S."/>
            <person name="Mohr C."/>
            <person name="Poehlmann R."/>
            <person name="Luedi P."/>
            <person name="Choi S."/>
            <person name="Wing R.A."/>
            <person name="Flavier A."/>
            <person name="Gaffney T.D."/>
            <person name="Philippsen P."/>
        </authorList>
    </citation>
    <scope>NUCLEOTIDE SEQUENCE [LARGE SCALE GENOMIC DNA]</scope>
    <source>
        <strain>ATCC 10895 / CBS 109.51 / FGSC 9923 / NRRL Y-1056</strain>
    </source>
</reference>
<reference key="2">
    <citation type="journal article" date="2013" name="G3 (Bethesda)">
        <title>Genomes of Ashbya fungi isolated from insects reveal four mating-type loci, numerous translocations, lack of transposons, and distinct gene duplications.</title>
        <authorList>
            <person name="Dietrich F.S."/>
            <person name="Voegeli S."/>
            <person name="Kuo S."/>
            <person name="Philippsen P."/>
        </authorList>
    </citation>
    <scope>GENOME REANNOTATION</scope>
    <source>
        <strain>ATCC 10895 / CBS 109.51 / FGSC 9923 / NRRL Y-1056</strain>
    </source>
</reference>
<sequence length="147" mass="16433">MAKYTEEELLQLKPTYDVAVNFDVDAFKAMIAEVAEHHEIADLFHQKARRRSSHHHGVKPKIKAHKPRITTDDDGWCTSTRKTSVVAVGDDGEPSPAFVAQETLRVKPNNKNIASSRPADTRDIVADKPTMSFNAFAALESDDEDQF</sequence>
<comment type="function">
    <text evidence="1">Acts as an inhibitor of cap-dependent translation. Competes with eIF4G1 and EAP1 for binding to eIF4E and interferes with the formation of the eIF4F complex, inhibiting translation and stabilizing mRNA (By similarity).</text>
</comment>
<comment type="subcellular location">
    <subcellularLocation>
        <location evidence="1">Cytoplasm</location>
    </subcellularLocation>
</comment>
<comment type="similarity">
    <text evidence="3">Belongs to the CAF20 family.</text>
</comment>
<accession>Q756C2</accession>
<keyword id="KW-0963">Cytoplasm</keyword>
<keyword id="KW-0396">Initiation factor</keyword>
<keyword id="KW-0597">Phosphoprotein</keyword>
<keyword id="KW-0648">Protein biosynthesis</keyword>
<keyword id="KW-0652">Protein synthesis inhibitor</keyword>
<keyword id="KW-1185">Reference proteome</keyword>
<keyword id="KW-0810">Translation regulation</keyword>
<dbReference type="EMBL" id="AE016818">
    <property type="protein sequence ID" value="AAS53025.1"/>
    <property type="molecule type" value="Genomic_DNA"/>
</dbReference>
<dbReference type="RefSeq" id="NP_985201.1">
    <property type="nucleotide sequence ID" value="NM_210555.1"/>
</dbReference>
<dbReference type="SMR" id="Q756C2"/>
<dbReference type="FunCoup" id="Q756C2">
    <property type="interactions" value="372"/>
</dbReference>
<dbReference type="STRING" id="284811.Q756C2"/>
<dbReference type="EnsemblFungi" id="AAS53025">
    <property type="protein sequence ID" value="AAS53025"/>
    <property type="gene ID" value="AGOS_AER345W"/>
</dbReference>
<dbReference type="GeneID" id="4621415"/>
<dbReference type="KEGG" id="ago:AGOS_AER345W"/>
<dbReference type="eggNOG" id="ENOG502S2E7">
    <property type="taxonomic scope" value="Eukaryota"/>
</dbReference>
<dbReference type="HOGENOM" id="CLU_128343_0_0_1"/>
<dbReference type="InParanoid" id="Q756C2"/>
<dbReference type="OMA" id="GRPKVKH"/>
<dbReference type="OrthoDB" id="3995390at2759"/>
<dbReference type="Proteomes" id="UP000000591">
    <property type="component" value="Chromosome V"/>
</dbReference>
<dbReference type="GO" id="GO:0005737">
    <property type="term" value="C:cytoplasm"/>
    <property type="evidence" value="ECO:0007669"/>
    <property type="project" value="UniProtKB-SubCell"/>
</dbReference>
<dbReference type="GO" id="GO:0008190">
    <property type="term" value="F:eukaryotic initiation factor 4E binding"/>
    <property type="evidence" value="ECO:0007669"/>
    <property type="project" value="EnsemblFungi"/>
</dbReference>
<dbReference type="GO" id="GO:0003743">
    <property type="term" value="F:translation initiation factor activity"/>
    <property type="evidence" value="ECO:0007669"/>
    <property type="project" value="UniProtKB-KW"/>
</dbReference>
<dbReference type="GO" id="GO:0030447">
    <property type="term" value="P:filamentous growth"/>
    <property type="evidence" value="ECO:0007669"/>
    <property type="project" value="EnsemblFungi"/>
</dbReference>
<dbReference type="GO" id="GO:0017148">
    <property type="term" value="P:negative regulation of translation"/>
    <property type="evidence" value="ECO:0007669"/>
    <property type="project" value="UniProtKB-KW"/>
</dbReference>
<dbReference type="GO" id="GO:0010606">
    <property type="term" value="P:positive regulation of cytoplasmic mRNA processing body assembly"/>
    <property type="evidence" value="ECO:0007669"/>
    <property type="project" value="EnsemblFungi"/>
</dbReference>
<dbReference type="GO" id="GO:0045727">
    <property type="term" value="P:positive regulation of translation"/>
    <property type="evidence" value="ECO:0007669"/>
    <property type="project" value="EnsemblFungi"/>
</dbReference>
<dbReference type="InterPro" id="IPR031456">
    <property type="entry name" value="Caf20"/>
</dbReference>
<dbReference type="Pfam" id="PF17052">
    <property type="entry name" value="CAF20"/>
    <property type="match status" value="1"/>
</dbReference>
<proteinExistence type="inferred from homology"/>
<feature type="chain" id="PRO_0000330083" description="Cap-associated protein CAF20">
    <location>
        <begin position="1"/>
        <end position="147"/>
    </location>
</feature>
<feature type="region of interest" description="Disordered" evidence="2">
    <location>
        <begin position="46"/>
        <end position="76"/>
    </location>
</feature>
<feature type="compositionally biased region" description="Basic residues" evidence="2">
    <location>
        <begin position="46"/>
        <end position="68"/>
    </location>
</feature>
<gene>
    <name type="primary">CAF20</name>
    <name type="ordered locus">AER345W</name>
</gene>
<protein>
    <recommendedName>
        <fullName>Cap-associated protein CAF20</fullName>
    </recommendedName>
</protein>
<evidence type="ECO:0000250" key="1"/>
<evidence type="ECO:0000256" key="2">
    <source>
        <dbReference type="SAM" id="MobiDB-lite"/>
    </source>
</evidence>
<evidence type="ECO:0000305" key="3"/>
<name>CAF20_EREGS</name>
<organism>
    <name type="scientific">Eremothecium gossypii (strain ATCC 10895 / CBS 109.51 / FGSC 9923 / NRRL Y-1056)</name>
    <name type="common">Yeast</name>
    <name type="synonym">Ashbya gossypii</name>
    <dbReference type="NCBI Taxonomy" id="284811"/>
    <lineage>
        <taxon>Eukaryota</taxon>
        <taxon>Fungi</taxon>
        <taxon>Dikarya</taxon>
        <taxon>Ascomycota</taxon>
        <taxon>Saccharomycotina</taxon>
        <taxon>Saccharomycetes</taxon>
        <taxon>Saccharomycetales</taxon>
        <taxon>Saccharomycetaceae</taxon>
        <taxon>Eremothecium</taxon>
    </lineage>
</organism>